<reference key="1">
    <citation type="journal article" date="2006" name="Appl. Environ. Microbiol.">
        <title>Genome sequence of the chemolithoautotrophic nitrite-oxidizing bacterium Nitrobacter winogradskyi Nb-255.</title>
        <authorList>
            <person name="Starkenburg S.R."/>
            <person name="Chain P.S.G."/>
            <person name="Sayavedra-Soto L.A."/>
            <person name="Hauser L."/>
            <person name="Land M.L."/>
            <person name="Larimer F.W."/>
            <person name="Malfatti S.A."/>
            <person name="Klotz M.G."/>
            <person name="Bottomley P.J."/>
            <person name="Arp D.J."/>
            <person name="Hickey W.J."/>
        </authorList>
    </citation>
    <scope>NUCLEOTIDE SEQUENCE [LARGE SCALE GENOMIC DNA]</scope>
    <source>
        <strain>ATCC 25391 / DSM 10237 / CIP 104748 / NCIMB 11846 / Nb-255</strain>
    </source>
</reference>
<protein>
    <recommendedName>
        <fullName evidence="1">UPF0391 membrane protein Nwi_2359</fullName>
    </recommendedName>
</protein>
<keyword id="KW-1003">Cell membrane</keyword>
<keyword id="KW-0472">Membrane</keyword>
<keyword id="KW-1185">Reference proteome</keyword>
<keyword id="KW-0812">Transmembrane</keyword>
<keyword id="KW-1133">Transmembrane helix</keyword>
<feature type="chain" id="PRO_0000256751" description="UPF0391 membrane protein Nwi_2359">
    <location>
        <begin position="1"/>
        <end position="57"/>
    </location>
</feature>
<feature type="transmembrane region" description="Helical" evidence="1">
    <location>
        <begin position="4"/>
        <end position="24"/>
    </location>
</feature>
<feature type="transmembrane region" description="Helical" evidence="1">
    <location>
        <begin position="30"/>
        <end position="50"/>
    </location>
</feature>
<organism>
    <name type="scientific">Nitrobacter winogradskyi (strain ATCC 25391 / DSM 10237 / CIP 104748 / NCIMB 11846 / Nb-255)</name>
    <dbReference type="NCBI Taxonomy" id="323098"/>
    <lineage>
        <taxon>Bacteria</taxon>
        <taxon>Pseudomonadati</taxon>
        <taxon>Pseudomonadota</taxon>
        <taxon>Alphaproteobacteria</taxon>
        <taxon>Hyphomicrobiales</taxon>
        <taxon>Nitrobacteraceae</taxon>
        <taxon>Nitrobacter</taxon>
    </lineage>
</organism>
<comment type="subcellular location">
    <subcellularLocation>
        <location evidence="1">Cell membrane</location>
        <topology evidence="1">Multi-pass membrane protein</topology>
    </subcellularLocation>
</comment>
<comment type="similarity">
    <text evidence="1">Belongs to the UPF0391 family.</text>
</comment>
<accession>Q3SQ28</accession>
<sequence>MLNWVVTFLVIALIAGVLGFGGIAGASFEIAKIIFFIALILFVISAVVGFLRGRNRV</sequence>
<evidence type="ECO:0000255" key="1">
    <source>
        <dbReference type="HAMAP-Rule" id="MF_01361"/>
    </source>
</evidence>
<proteinExistence type="inferred from homology"/>
<gene>
    <name type="ordered locus">Nwi_2359</name>
</gene>
<dbReference type="EMBL" id="CP000115">
    <property type="protein sequence ID" value="ABA05613.1"/>
    <property type="molecule type" value="Genomic_DNA"/>
</dbReference>
<dbReference type="RefSeq" id="WP_011315575.1">
    <property type="nucleotide sequence ID" value="NC_007406.1"/>
</dbReference>
<dbReference type="STRING" id="323098.Nwi_2359"/>
<dbReference type="KEGG" id="nwi:Nwi_2359"/>
<dbReference type="eggNOG" id="COG5487">
    <property type="taxonomic scope" value="Bacteria"/>
</dbReference>
<dbReference type="HOGENOM" id="CLU_187346_2_1_5"/>
<dbReference type="Proteomes" id="UP000002531">
    <property type="component" value="Chromosome"/>
</dbReference>
<dbReference type="GO" id="GO:0005886">
    <property type="term" value="C:plasma membrane"/>
    <property type="evidence" value="ECO:0007669"/>
    <property type="project" value="UniProtKB-SubCell"/>
</dbReference>
<dbReference type="HAMAP" id="MF_01361">
    <property type="entry name" value="UPF0391"/>
    <property type="match status" value="1"/>
</dbReference>
<dbReference type="InterPro" id="IPR009760">
    <property type="entry name" value="DUF1328"/>
</dbReference>
<dbReference type="NCBIfam" id="NF010228">
    <property type="entry name" value="PRK13682.1-3"/>
    <property type="match status" value="1"/>
</dbReference>
<dbReference type="NCBIfam" id="NF010229">
    <property type="entry name" value="PRK13682.1-4"/>
    <property type="match status" value="1"/>
</dbReference>
<dbReference type="Pfam" id="PF07043">
    <property type="entry name" value="DUF1328"/>
    <property type="match status" value="1"/>
</dbReference>
<dbReference type="PIRSF" id="PIRSF036466">
    <property type="entry name" value="UCP036466"/>
    <property type="match status" value="1"/>
</dbReference>
<name>Y2359_NITWN</name>